<protein>
    <recommendedName>
        <fullName>WD repeat-containing protein 48</fullName>
    </recommendedName>
    <alternativeName>
        <fullName>USP1-associated factor 1</fullName>
    </alternativeName>
</protein>
<proteinExistence type="evidence at transcript level"/>
<comment type="function">
    <text evidence="2">Regulator of deubiquitinating complexes, which acts as a strong activator of USP1, USP12 and USP46. Enhances the USP1-mediated deubiquitination of FANCD2; USP1 being almost inactive by itself. Activates deubiquitination by increasing the catalytic turnover without increasing the affinity of deubiquitinating enzymes for the substrate. Also activates deubiquitinating activity of complexes containing USP12. Docks at the distal end of the USP12 fingers domain and induces a cascade of structural changes leading to the activation of the enzyme. Together with RAD51AP1, promotes DNA repair by stimulating RAD51-mediated homologous recombination. Binds single-stranded DNA (ssDNA) and double-stranded DNA (dsDNA). DNA-binding is required both for USP1-mediated deubiquitination of FANCD2 and stimulation of RAD51-mediated homologous recombination: both WDR48/UAF1 and RAD51AP1 have coordinated role in DNA-binding during these processes. Together with ATAD5 and by regulating USP1 activity, has a role in PCNA-mediated translesion synthesis (TLS) by deubiquitinating monoubiquitinated PCNA. Together with ATAD5, has a role in recruiting RAD51 to stalled forks during replication stress.</text>
</comment>
<comment type="subunit">
    <text evidence="2">Interacts with USP46. Interacts with USP1. Interacts with USP12. Component of the USP12-WDR20-WDR48 deubiquitinating complex. Component of the USP12-DMWD-WDR48 deubiquitinating complex. Interacts with PHLPP1. Interacts with RAD51AP1; the interaction is direct and promotes formation of a trimeric complex with RAD51 via RAD51AP1. Interacts with ATAD5; the interaction regulates USP1-mediated PCNA deubiquitination. Interacts with RAD51; the interaction is enhanced under replication stress. Interacts with ITCH; the interaction is more efficient when both USP12 and WDR48/UAF1 are involved and may facilitate recruitment of the USP12 deubiquitinating complex to Notch.</text>
</comment>
<comment type="subcellular location">
    <subcellularLocation>
        <location evidence="2">Nucleus</location>
    </subcellularLocation>
    <subcellularLocation>
        <location evidence="2">Cytoplasm</location>
    </subcellularLocation>
    <subcellularLocation>
        <location evidence="2">Lysosome</location>
    </subcellularLocation>
    <subcellularLocation>
        <location evidence="2">Late endosome</location>
    </subcellularLocation>
    <text evidence="2">Mainly in cytoplasmic compartments.</text>
</comment>
<comment type="domain">
    <text evidence="2">The WD repeats are required for the interaction with deubiquitinating enzymes USP1, USP12 and USP46.</text>
</comment>
<comment type="similarity">
    <text evidence="5">Belongs to the WD repeat WDR48 family.</text>
</comment>
<reference key="1">
    <citation type="submission" date="2005-10" db="EMBL/GenBank/DDBJ databases">
        <authorList>
            <consortium name="NIH - Mammalian Gene Collection (MGC) project"/>
        </authorList>
    </citation>
    <scope>NUCLEOTIDE SEQUENCE [LARGE SCALE MRNA]</scope>
    <source>
        <strain>Hereford</strain>
        <tissue>Thymus</tissue>
    </source>
</reference>
<gene>
    <name type="primary">WDR48</name>
    <name type="synonym">UAF1</name>
</gene>
<name>WDR48_BOVIN</name>
<evidence type="ECO:0000250" key="1">
    <source>
        <dbReference type="UniProtKB" id="Q8BH57"/>
    </source>
</evidence>
<evidence type="ECO:0000250" key="2">
    <source>
        <dbReference type="UniProtKB" id="Q8TAF3"/>
    </source>
</evidence>
<evidence type="ECO:0000255" key="3"/>
<evidence type="ECO:0000256" key="4">
    <source>
        <dbReference type="SAM" id="MobiDB-lite"/>
    </source>
</evidence>
<evidence type="ECO:0000305" key="5"/>
<evidence type="ECO:0000312" key="6">
    <source>
        <dbReference type="Proteomes" id="UP000009136"/>
    </source>
</evidence>
<dbReference type="EMBL" id="BC108126">
    <property type="protein sequence ID" value="AAI08127.1"/>
    <property type="molecule type" value="mRNA"/>
</dbReference>
<dbReference type="RefSeq" id="NP_001069992.1">
    <property type="nucleotide sequence ID" value="NM_001076524.1"/>
</dbReference>
<dbReference type="SMR" id="Q32PG3"/>
<dbReference type="FunCoup" id="Q32PG3">
    <property type="interactions" value="4032"/>
</dbReference>
<dbReference type="STRING" id="9913.ENSBTAP00000004876"/>
<dbReference type="PaxDb" id="9913-ENSBTAP00000004876"/>
<dbReference type="GeneID" id="618860"/>
<dbReference type="KEGG" id="bta:618860"/>
<dbReference type="CTD" id="57599"/>
<dbReference type="eggNOG" id="KOG0308">
    <property type="taxonomic scope" value="Eukaryota"/>
</dbReference>
<dbReference type="InParanoid" id="Q32PG3"/>
<dbReference type="OrthoDB" id="2421129at2759"/>
<dbReference type="Proteomes" id="UP000009136">
    <property type="component" value="Unplaced"/>
</dbReference>
<dbReference type="GO" id="GO:0005770">
    <property type="term" value="C:late endosome"/>
    <property type="evidence" value="ECO:0007669"/>
    <property type="project" value="UniProtKB-SubCell"/>
</dbReference>
<dbReference type="GO" id="GO:0005764">
    <property type="term" value="C:lysosome"/>
    <property type="evidence" value="ECO:0007669"/>
    <property type="project" value="UniProtKB-SubCell"/>
</dbReference>
<dbReference type="GO" id="GO:0005634">
    <property type="term" value="C:nucleus"/>
    <property type="evidence" value="ECO:0000250"/>
    <property type="project" value="UniProtKB"/>
</dbReference>
<dbReference type="GO" id="GO:0035800">
    <property type="term" value="F:deubiquitinase activator activity"/>
    <property type="evidence" value="ECO:0000250"/>
    <property type="project" value="UniProtKB"/>
</dbReference>
<dbReference type="GO" id="GO:0003677">
    <property type="term" value="F:DNA binding"/>
    <property type="evidence" value="ECO:0000250"/>
    <property type="project" value="UniProtKB"/>
</dbReference>
<dbReference type="GO" id="GO:0003690">
    <property type="term" value="F:double-stranded DNA binding"/>
    <property type="evidence" value="ECO:0000250"/>
    <property type="project" value="UniProtKB"/>
</dbReference>
<dbReference type="GO" id="GO:0003697">
    <property type="term" value="F:single-stranded DNA binding"/>
    <property type="evidence" value="ECO:0000250"/>
    <property type="project" value="UniProtKB"/>
</dbReference>
<dbReference type="GO" id="GO:0043130">
    <property type="term" value="F:ubiquitin binding"/>
    <property type="evidence" value="ECO:0000318"/>
    <property type="project" value="GO_Central"/>
</dbReference>
<dbReference type="GO" id="GO:0006974">
    <property type="term" value="P:DNA damage response"/>
    <property type="evidence" value="ECO:0000250"/>
    <property type="project" value="UniProtKB"/>
</dbReference>
<dbReference type="GO" id="GO:0000724">
    <property type="term" value="P:double-strand break repair via homologous recombination"/>
    <property type="evidence" value="ECO:0000318"/>
    <property type="project" value="GO_Central"/>
</dbReference>
<dbReference type="GO" id="GO:1905168">
    <property type="term" value="P:positive regulation of double-strand break repair via homologous recombination"/>
    <property type="evidence" value="ECO:0000250"/>
    <property type="project" value="UniProtKB"/>
</dbReference>
<dbReference type="CDD" id="cd17041">
    <property type="entry name" value="Ubl_WDR48"/>
    <property type="match status" value="1"/>
</dbReference>
<dbReference type="CDD" id="cd00200">
    <property type="entry name" value="WD40"/>
    <property type="match status" value="1"/>
</dbReference>
<dbReference type="FunFam" id="2.130.10.10:FF:000054">
    <property type="entry name" value="Putative WD repeat-containing protein 48"/>
    <property type="match status" value="1"/>
</dbReference>
<dbReference type="FunFam" id="2.130.10.10:FF:002031">
    <property type="entry name" value="WD repeat domain 48b"/>
    <property type="match status" value="1"/>
</dbReference>
<dbReference type="Gene3D" id="2.130.10.10">
    <property type="entry name" value="YVTN repeat-like/Quinoprotein amine dehydrogenase"/>
    <property type="match status" value="2"/>
</dbReference>
<dbReference type="InterPro" id="IPR020472">
    <property type="entry name" value="G-protein_beta_WD-40_rep"/>
</dbReference>
<dbReference type="InterPro" id="IPR015943">
    <property type="entry name" value="WD40/YVTN_repeat-like_dom_sf"/>
</dbReference>
<dbReference type="InterPro" id="IPR019775">
    <property type="entry name" value="WD40_repeat_CS"/>
</dbReference>
<dbReference type="InterPro" id="IPR036322">
    <property type="entry name" value="WD40_repeat_dom_sf"/>
</dbReference>
<dbReference type="InterPro" id="IPR001680">
    <property type="entry name" value="WD40_rpt"/>
</dbReference>
<dbReference type="InterPro" id="IPR051246">
    <property type="entry name" value="WDR48"/>
</dbReference>
<dbReference type="InterPro" id="IPR021772">
    <property type="entry name" value="WDR48/Bun107"/>
</dbReference>
<dbReference type="PANTHER" id="PTHR19862">
    <property type="entry name" value="WD REPEAT-CONTAINING PROTEIN 48"/>
    <property type="match status" value="1"/>
</dbReference>
<dbReference type="PANTHER" id="PTHR19862:SF14">
    <property type="entry name" value="WD REPEAT-CONTAINING PROTEIN 48"/>
    <property type="match status" value="1"/>
</dbReference>
<dbReference type="Pfam" id="PF11816">
    <property type="entry name" value="DUF3337"/>
    <property type="match status" value="1"/>
</dbReference>
<dbReference type="Pfam" id="PF00400">
    <property type="entry name" value="WD40"/>
    <property type="match status" value="6"/>
</dbReference>
<dbReference type="PRINTS" id="PR00320">
    <property type="entry name" value="GPROTEINBRPT"/>
</dbReference>
<dbReference type="SMART" id="SM00320">
    <property type="entry name" value="WD40"/>
    <property type="match status" value="7"/>
</dbReference>
<dbReference type="SUPFAM" id="SSF50978">
    <property type="entry name" value="WD40 repeat-like"/>
    <property type="match status" value="1"/>
</dbReference>
<dbReference type="PROSITE" id="PS00678">
    <property type="entry name" value="WD_REPEATS_1"/>
    <property type="match status" value="2"/>
</dbReference>
<dbReference type="PROSITE" id="PS50082">
    <property type="entry name" value="WD_REPEATS_2"/>
    <property type="match status" value="5"/>
</dbReference>
<dbReference type="PROSITE" id="PS50294">
    <property type="entry name" value="WD_REPEATS_REGION"/>
    <property type="match status" value="4"/>
</dbReference>
<keyword id="KW-0007">Acetylation</keyword>
<keyword id="KW-0963">Cytoplasm</keyword>
<keyword id="KW-0227">DNA damage</keyword>
<keyword id="KW-0234">DNA repair</keyword>
<keyword id="KW-0238">DNA-binding</keyword>
<keyword id="KW-0967">Endosome</keyword>
<keyword id="KW-0458">Lysosome</keyword>
<keyword id="KW-0539">Nucleus</keyword>
<keyword id="KW-0597">Phosphoprotein</keyword>
<keyword id="KW-1185">Reference proteome</keyword>
<keyword id="KW-0677">Repeat</keyword>
<keyword id="KW-0833">Ubl conjugation pathway</keyword>
<keyword id="KW-0853">WD repeat</keyword>
<organism evidence="6">
    <name type="scientific">Bos taurus</name>
    <name type="common">Bovine</name>
    <dbReference type="NCBI Taxonomy" id="9913"/>
    <lineage>
        <taxon>Eukaryota</taxon>
        <taxon>Metazoa</taxon>
        <taxon>Chordata</taxon>
        <taxon>Craniata</taxon>
        <taxon>Vertebrata</taxon>
        <taxon>Euteleostomi</taxon>
        <taxon>Mammalia</taxon>
        <taxon>Eutheria</taxon>
        <taxon>Laurasiatheria</taxon>
        <taxon>Artiodactyla</taxon>
        <taxon>Ruminantia</taxon>
        <taxon>Pecora</taxon>
        <taxon>Bovidae</taxon>
        <taxon>Bovinae</taxon>
        <taxon>Bos</taxon>
    </lineage>
</organism>
<sequence length="677" mass="76192">MAAHHRQNTAGRRKVQVSYVIRDEVEKYNRNGVNALQLDPALNRLFTAGRDSIIRIWSVNQHKQDPYIASMEHHTDWVNDIVLCCNGKTLISASSDTTVKVWNAHKGFCMSTLRTHKDYVKALAYAKDKELVASAGLDRQIFLWDVNTLTALTASNNTVTTSSLSGNKDSIYSLAMNQLGTIIVSGSTEKVLRVWDPRTCAKLMKLKGHTDNVKALLLNRDGTQCLSGSSDGTIRLWSLGQQRCIATYRVHDEGVWALQVNDAFTHVYSGGRDRKIYCTDLRNPDIRVLICEEKAPVLKMELDRSADPPPAIWVATTKSTVNKWTLKGIHNFRASGDYDNDCTNPITPLCTQPDQVIKGGASIIQCHILNDKRHLLTKDTNNNVAYWDVLKACKVEDLGKVDFEDEIKKRFKMVYVPNWFSVDLKTGMLTITLDESDCFAAWVSAKDAGFSSPDGSDPKLNLGGLLLQALLEYWPRTHVNPIDEEENEVNHVNGEQENRVQKGNGYFQVPPHTPVIFGEAGGRTLFRLLCRDSGGETESMLLNETVPQWVIDITVDKNMPKFNKIPFYLQPHASSGAKTLKKDRLSASDMLQVRKVMEHVYEKIINLDNESQTTSSSNNEKPGEQEKEEDIAVLAEEKIELLCQDQVLDPNMDLRTVKHFIWKSGGDLTLHYRQKST</sequence>
<accession>Q32PG3</accession>
<feature type="chain" id="PRO_0000378972" description="WD repeat-containing protein 48">
    <location>
        <begin position="1"/>
        <end position="677"/>
    </location>
</feature>
<feature type="repeat" description="WD 1" evidence="3">
    <location>
        <begin position="28"/>
        <end position="67"/>
    </location>
</feature>
<feature type="repeat" description="WD 2" evidence="3">
    <location>
        <begin position="73"/>
        <end position="112"/>
    </location>
</feature>
<feature type="repeat" description="WD 3" evidence="3">
    <location>
        <begin position="115"/>
        <end position="154"/>
    </location>
</feature>
<feature type="repeat" description="WD 4" evidence="3">
    <location>
        <begin position="166"/>
        <end position="205"/>
    </location>
</feature>
<feature type="repeat" description="WD 5" evidence="3">
    <location>
        <begin position="208"/>
        <end position="247"/>
    </location>
</feature>
<feature type="repeat" description="WD 6" evidence="3">
    <location>
        <begin position="250"/>
        <end position="289"/>
    </location>
</feature>
<feature type="repeat" description="WD 7" evidence="3">
    <location>
        <begin position="292"/>
        <end position="334"/>
    </location>
</feature>
<feature type="repeat" description="WD 8" evidence="3">
    <location>
        <begin position="358"/>
        <end position="397"/>
    </location>
</feature>
<feature type="region of interest" description="Disordered" evidence="4">
    <location>
        <begin position="607"/>
        <end position="628"/>
    </location>
</feature>
<feature type="compositionally biased region" description="Low complexity" evidence="4">
    <location>
        <begin position="609"/>
        <end position="620"/>
    </location>
</feature>
<feature type="modified residue" description="Phosphotyrosine" evidence="1">
    <location>
        <position position="28"/>
    </location>
</feature>
<feature type="modified residue" description="N6-acetyllysine" evidence="2">
    <location>
        <position position="214"/>
    </location>
</feature>
<feature type="modified residue" description="N6-acetyllysine" evidence="1">
    <location>
        <position position="578"/>
    </location>
</feature>
<feature type="modified residue" description="Phosphothreonine" evidence="2">
    <location>
        <position position="613"/>
    </location>
</feature>